<protein>
    <recommendedName>
        <fullName evidence="1">Cytochrome c-type biogenesis protein CcmE</fullName>
    </recommendedName>
    <alternativeName>
        <fullName evidence="1">Cytochrome c maturation protein E</fullName>
    </alternativeName>
    <alternativeName>
        <fullName evidence="1">Heme chaperone CcmE</fullName>
    </alternativeName>
</protein>
<accession>A1SZ07</accession>
<sequence length="155" mass="16908">MNPRRKKRLLITSLLAVALSLAVGLVLFALQQNIDLFYTPTEIIEGKKETGIKPEVGQRLRIGGMVVQGSVKRNPESLKVSFDLVDNGGGIVTVFFDGILPDLFREGQGIVAQGNLLNATEINASEVLAKHDEEYMPPEVSEALVGMDNFKANNK</sequence>
<dbReference type="EMBL" id="CP000510">
    <property type="protein sequence ID" value="ABM04722.1"/>
    <property type="molecule type" value="Genomic_DNA"/>
</dbReference>
<dbReference type="RefSeq" id="WP_011771276.1">
    <property type="nucleotide sequence ID" value="NC_008709.1"/>
</dbReference>
<dbReference type="SMR" id="A1SZ07"/>
<dbReference type="STRING" id="357804.Ping_3020"/>
<dbReference type="KEGG" id="pin:Ping_3020"/>
<dbReference type="eggNOG" id="COG2332">
    <property type="taxonomic scope" value="Bacteria"/>
</dbReference>
<dbReference type="HOGENOM" id="CLU_079503_1_0_6"/>
<dbReference type="OrthoDB" id="9793584at2"/>
<dbReference type="Proteomes" id="UP000000639">
    <property type="component" value="Chromosome"/>
</dbReference>
<dbReference type="GO" id="GO:0005886">
    <property type="term" value="C:plasma membrane"/>
    <property type="evidence" value="ECO:0007669"/>
    <property type="project" value="UniProtKB-SubCell"/>
</dbReference>
<dbReference type="GO" id="GO:0020037">
    <property type="term" value="F:heme binding"/>
    <property type="evidence" value="ECO:0007669"/>
    <property type="project" value="InterPro"/>
</dbReference>
<dbReference type="GO" id="GO:0046872">
    <property type="term" value="F:metal ion binding"/>
    <property type="evidence" value="ECO:0007669"/>
    <property type="project" value="UniProtKB-KW"/>
</dbReference>
<dbReference type="GO" id="GO:0017004">
    <property type="term" value="P:cytochrome complex assembly"/>
    <property type="evidence" value="ECO:0007669"/>
    <property type="project" value="UniProtKB-KW"/>
</dbReference>
<dbReference type="FunFam" id="2.40.50.140:FF:000104">
    <property type="entry name" value="Cytochrome c-type biogenesis protein CcmE"/>
    <property type="match status" value="1"/>
</dbReference>
<dbReference type="Gene3D" id="2.40.50.140">
    <property type="entry name" value="Nucleic acid-binding proteins"/>
    <property type="match status" value="1"/>
</dbReference>
<dbReference type="HAMAP" id="MF_01959">
    <property type="entry name" value="CcmE"/>
    <property type="match status" value="1"/>
</dbReference>
<dbReference type="InterPro" id="IPR004329">
    <property type="entry name" value="CcmE"/>
</dbReference>
<dbReference type="InterPro" id="IPR036127">
    <property type="entry name" value="CcmE-like_sf"/>
</dbReference>
<dbReference type="InterPro" id="IPR012340">
    <property type="entry name" value="NA-bd_OB-fold"/>
</dbReference>
<dbReference type="NCBIfam" id="NF009638">
    <property type="entry name" value="PRK13165.1"/>
    <property type="match status" value="1"/>
</dbReference>
<dbReference type="NCBIfam" id="NF009727">
    <property type="entry name" value="PRK13254.1-1"/>
    <property type="match status" value="1"/>
</dbReference>
<dbReference type="PANTHER" id="PTHR34128">
    <property type="entry name" value="CYTOCHROME C-TYPE BIOGENESIS PROTEIN CCME HOMOLOG, MITOCHONDRIAL"/>
    <property type="match status" value="1"/>
</dbReference>
<dbReference type="PANTHER" id="PTHR34128:SF2">
    <property type="entry name" value="CYTOCHROME C-TYPE BIOGENESIS PROTEIN CCME HOMOLOG, MITOCHONDRIAL"/>
    <property type="match status" value="1"/>
</dbReference>
<dbReference type="Pfam" id="PF03100">
    <property type="entry name" value="CcmE"/>
    <property type="match status" value="1"/>
</dbReference>
<dbReference type="SUPFAM" id="SSF82093">
    <property type="entry name" value="Heme chaperone CcmE"/>
    <property type="match status" value="1"/>
</dbReference>
<reference key="1">
    <citation type="journal article" date="2008" name="BMC Genomics">
        <title>Genomics of an extreme psychrophile, Psychromonas ingrahamii.</title>
        <authorList>
            <person name="Riley M."/>
            <person name="Staley J.T."/>
            <person name="Danchin A."/>
            <person name="Wang T.Z."/>
            <person name="Brettin T.S."/>
            <person name="Hauser L.J."/>
            <person name="Land M.L."/>
            <person name="Thompson L.S."/>
        </authorList>
    </citation>
    <scope>NUCLEOTIDE SEQUENCE [LARGE SCALE GENOMIC DNA]</scope>
    <source>
        <strain>DSM 17664 / CCUG 51855 / 37</strain>
    </source>
</reference>
<keyword id="KW-0997">Cell inner membrane</keyword>
<keyword id="KW-1003">Cell membrane</keyword>
<keyword id="KW-0201">Cytochrome c-type biogenesis</keyword>
<keyword id="KW-0349">Heme</keyword>
<keyword id="KW-0408">Iron</keyword>
<keyword id="KW-0472">Membrane</keyword>
<keyword id="KW-0479">Metal-binding</keyword>
<keyword id="KW-1185">Reference proteome</keyword>
<keyword id="KW-0735">Signal-anchor</keyword>
<keyword id="KW-0812">Transmembrane</keyword>
<keyword id="KW-1133">Transmembrane helix</keyword>
<evidence type="ECO:0000255" key="1">
    <source>
        <dbReference type="HAMAP-Rule" id="MF_01959"/>
    </source>
</evidence>
<name>CCME_PSYIN</name>
<organism>
    <name type="scientific">Psychromonas ingrahamii (strain DSM 17664 / CCUG 51855 / 37)</name>
    <dbReference type="NCBI Taxonomy" id="357804"/>
    <lineage>
        <taxon>Bacteria</taxon>
        <taxon>Pseudomonadati</taxon>
        <taxon>Pseudomonadota</taxon>
        <taxon>Gammaproteobacteria</taxon>
        <taxon>Alteromonadales</taxon>
        <taxon>Psychromonadaceae</taxon>
        <taxon>Psychromonas</taxon>
    </lineage>
</organism>
<feature type="chain" id="PRO_1000070837" description="Cytochrome c-type biogenesis protein CcmE">
    <location>
        <begin position="1"/>
        <end position="155"/>
    </location>
</feature>
<feature type="topological domain" description="Cytoplasmic" evidence="1">
    <location>
        <begin position="1"/>
        <end position="8"/>
    </location>
</feature>
<feature type="transmembrane region" description="Helical; Signal-anchor for type II membrane protein" evidence="1">
    <location>
        <begin position="9"/>
        <end position="29"/>
    </location>
</feature>
<feature type="topological domain" description="Periplasmic" evidence="1">
    <location>
        <begin position="30"/>
        <end position="155"/>
    </location>
</feature>
<feature type="binding site" description="covalent" evidence="1">
    <location>
        <position position="131"/>
    </location>
    <ligand>
        <name>heme</name>
        <dbReference type="ChEBI" id="CHEBI:30413"/>
    </ligand>
</feature>
<feature type="binding site" description="axial binding residue" evidence="1">
    <location>
        <position position="135"/>
    </location>
    <ligand>
        <name>heme</name>
        <dbReference type="ChEBI" id="CHEBI:30413"/>
    </ligand>
    <ligandPart>
        <name>Fe</name>
        <dbReference type="ChEBI" id="CHEBI:18248"/>
    </ligandPart>
</feature>
<gene>
    <name evidence="1" type="primary">ccmE</name>
    <name evidence="1" type="synonym">cycJ</name>
    <name type="ordered locus">Ping_3020</name>
</gene>
<proteinExistence type="inferred from homology"/>
<comment type="function">
    <text evidence="1">Heme chaperone required for the biogenesis of c-type cytochromes. Transiently binds heme delivered by CcmC and transfers the heme to apo-cytochromes in a process facilitated by CcmF and CcmH.</text>
</comment>
<comment type="subcellular location">
    <subcellularLocation>
        <location evidence="1">Cell inner membrane</location>
        <topology evidence="1">Single-pass type II membrane protein</topology>
        <orientation evidence="1">Periplasmic side</orientation>
    </subcellularLocation>
</comment>
<comment type="similarity">
    <text evidence="1">Belongs to the CcmE/CycJ family.</text>
</comment>